<accession>Q93W28</accession>
<accession>O23405</accession>
<comment type="sequence caution" evidence="3">
    <conflict type="erroneous gene model prediction">
        <sequence resource="EMBL-CDS" id="CAB10332"/>
    </conflict>
    <text>The predicted gene At4g15540 has been split into 2 genes: At4g15540 and At4g15545.</text>
</comment>
<comment type="sequence caution" evidence="3">
    <conflict type="erroneous gene model prediction">
        <sequence resource="EMBL-CDS" id="CAB78596"/>
    </conflict>
    <text>The predicted gene At4g15540 has been split into 2 genes: At4g15540 and At4g15545.</text>
</comment>
<sequence length="337" mass="37206">MSEIEEEEEEGSASAITGSRSFDLPDELLQVLPSDPFEQLDVARKITSIALSTRVSALESESSDLRELLAEKEKEFEELQSHVESLEASLSDAFHKLSLADGEKENLIRENASLSNTVKRLQRDVSKLEGFRKTLMMSLQDDDQNAGTTQIIAKPTPNDDDTPFQPSRHSSIQSQQASEAIEPAATDNENDAPKPSLSASLPLVSQTTTPRLTPPGSPPILSASGTPKTTSRPISPRRHSVSFATTRGMFDDTRSSISISEPGSQTARTRVDGKEFFRQVRSRLSYEQFGAFLGNVKDLNAHKQTREETLRKAEEIFGGDNRDLYVIFEGLITRNAH</sequence>
<proteinExistence type="evidence at protein level"/>
<evidence type="ECO:0000255" key="1"/>
<evidence type="ECO:0000256" key="2">
    <source>
        <dbReference type="SAM" id="MobiDB-lite"/>
    </source>
</evidence>
<evidence type="ECO:0000305" key="3"/>
<evidence type="ECO:0007744" key="4">
    <source>
    </source>
</evidence>
<evidence type="ECO:0007744" key="5">
    <source>
    </source>
</evidence>
<organism>
    <name type="scientific">Arabidopsis thaliana</name>
    <name type="common">Mouse-ear cress</name>
    <dbReference type="NCBI Taxonomy" id="3702"/>
    <lineage>
        <taxon>Eukaryota</taxon>
        <taxon>Viridiplantae</taxon>
        <taxon>Streptophyta</taxon>
        <taxon>Embryophyta</taxon>
        <taxon>Tracheophyta</taxon>
        <taxon>Spermatophyta</taxon>
        <taxon>Magnoliopsida</taxon>
        <taxon>eudicotyledons</taxon>
        <taxon>Gunneridae</taxon>
        <taxon>Pentapetalae</taxon>
        <taxon>rosids</taxon>
        <taxon>malvids</taxon>
        <taxon>Brassicales</taxon>
        <taxon>Brassicaceae</taxon>
        <taxon>Camelineae</taxon>
        <taxon>Arabidopsis</taxon>
    </lineage>
</organism>
<gene>
    <name type="ordered locus">At4g15545</name>
    <name type="ORF">dl3810w</name>
    <name type="ORF">FCAALL.328</name>
</gene>
<dbReference type="EMBL" id="Z97339">
    <property type="protein sequence ID" value="CAB10332.1"/>
    <property type="status" value="ALT_SEQ"/>
    <property type="molecule type" value="Genomic_DNA"/>
</dbReference>
<dbReference type="EMBL" id="AL161541">
    <property type="protein sequence ID" value="CAB78596.1"/>
    <property type="status" value="ALT_SEQ"/>
    <property type="molecule type" value="Genomic_DNA"/>
</dbReference>
<dbReference type="EMBL" id="CP002687">
    <property type="protein sequence ID" value="AEE83623.1"/>
    <property type="molecule type" value="Genomic_DNA"/>
</dbReference>
<dbReference type="EMBL" id="AY039512">
    <property type="protein sequence ID" value="AAK62569.1"/>
    <property type="molecule type" value="mRNA"/>
</dbReference>
<dbReference type="EMBL" id="AY057513">
    <property type="protein sequence ID" value="AAL09754.1"/>
    <property type="molecule type" value="mRNA"/>
</dbReference>
<dbReference type="EMBL" id="AY057742">
    <property type="protein sequence ID" value="AAL15372.1"/>
    <property type="molecule type" value="mRNA"/>
</dbReference>
<dbReference type="EMBL" id="AY136431">
    <property type="protein sequence ID" value="AAM97097.1"/>
    <property type="molecule type" value="mRNA"/>
</dbReference>
<dbReference type="EMBL" id="BT000212">
    <property type="protein sequence ID" value="AAN15531.1"/>
    <property type="molecule type" value="mRNA"/>
</dbReference>
<dbReference type="EMBL" id="AY087027">
    <property type="protein sequence ID" value="AAM64588.1"/>
    <property type="molecule type" value="mRNA"/>
</dbReference>
<dbReference type="PIR" id="B71420">
    <property type="entry name" value="B71420"/>
</dbReference>
<dbReference type="RefSeq" id="NP_567470.1">
    <property type="nucleotide sequence ID" value="NM_117645.3"/>
</dbReference>
<dbReference type="SMR" id="Q93W28"/>
<dbReference type="BioGRID" id="12525">
    <property type="interactions" value="7"/>
</dbReference>
<dbReference type="FunCoup" id="Q93W28">
    <property type="interactions" value="495"/>
</dbReference>
<dbReference type="IntAct" id="Q93W28">
    <property type="interactions" value="5"/>
</dbReference>
<dbReference type="STRING" id="3702.Q93W28"/>
<dbReference type="iPTMnet" id="Q93W28"/>
<dbReference type="PaxDb" id="3702-AT4G15545.1"/>
<dbReference type="ProteomicsDB" id="242903"/>
<dbReference type="EnsemblPlants" id="AT4G15545.1">
    <property type="protein sequence ID" value="AT4G15545.1"/>
    <property type="gene ID" value="AT4G15545"/>
</dbReference>
<dbReference type="GeneID" id="827228"/>
<dbReference type="Gramene" id="AT4G15545.1">
    <property type="protein sequence ID" value="AT4G15545.1"/>
    <property type="gene ID" value="AT4G15545"/>
</dbReference>
<dbReference type="KEGG" id="ath:AT4G15545"/>
<dbReference type="Araport" id="AT4G15545"/>
<dbReference type="TAIR" id="AT4G15545">
    <property type="gene designation" value="NAIP1"/>
</dbReference>
<dbReference type="eggNOG" id="ENOG502QUBG">
    <property type="taxonomic scope" value="Eukaryota"/>
</dbReference>
<dbReference type="HOGENOM" id="CLU_052741_3_1_1"/>
<dbReference type="InParanoid" id="Q93W28"/>
<dbReference type="OMA" id="YKTRVSG"/>
<dbReference type="OrthoDB" id="5599468at2759"/>
<dbReference type="PhylomeDB" id="Q93W28"/>
<dbReference type="PRO" id="PR:Q93W28"/>
<dbReference type="Proteomes" id="UP000006548">
    <property type="component" value="Chromosome 4"/>
</dbReference>
<dbReference type="ExpressionAtlas" id="Q93W28">
    <property type="expression patterns" value="baseline and differential"/>
</dbReference>
<dbReference type="GO" id="GO:0005829">
    <property type="term" value="C:cytosol"/>
    <property type="evidence" value="ECO:0007005"/>
    <property type="project" value="TAIR"/>
</dbReference>
<dbReference type="GO" id="GO:0005783">
    <property type="term" value="C:endoplasmic reticulum"/>
    <property type="evidence" value="ECO:0000314"/>
    <property type="project" value="TAIR"/>
</dbReference>
<dbReference type="GO" id="GO:0010168">
    <property type="term" value="C:ER body"/>
    <property type="evidence" value="ECO:0000314"/>
    <property type="project" value="TAIR"/>
</dbReference>
<dbReference type="GO" id="GO:0080119">
    <property type="term" value="P:ER body organization"/>
    <property type="evidence" value="ECO:0000316"/>
    <property type="project" value="TAIR"/>
</dbReference>
<dbReference type="PANTHER" id="PTHR47383">
    <property type="entry name" value="OS03G0659800 PROTEIN"/>
    <property type="match status" value="1"/>
</dbReference>
<dbReference type="PANTHER" id="PTHR47383:SF3">
    <property type="entry name" value="WAT1-RELATED PROTEIN"/>
    <property type="match status" value="1"/>
</dbReference>
<keyword id="KW-0007">Acetylation</keyword>
<keyword id="KW-0175">Coiled coil</keyword>
<keyword id="KW-0597">Phosphoprotein</keyword>
<keyword id="KW-1185">Reference proteome</keyword>
<feature type="initiator methionine" description="Removed" evidence="5">
    <location>
        <position position="1"/>
    </location>
</feature>
<feature type="chain" id="PRO_0000421354" description="Uncharacterized protein At4g15545">
    <location>
        <begin position="2"/>
        <end position="337"/>
    </location>
</feature>
<feature type="region of interest" description="Disordered" evidence="2">
    <location>
        <begin position="1"/>
        <end position="20"/>
    </location>
</feature>
<feature type="region of interest" description="Disordered" evidence="2">
    <location>
        <begin position="139"/>
        <end position="242"/>
    </location>
</feature>
<feature type="coiled-coil region" evidence="1">
    <location>
        <begin position="50"/>
        <end position="130"/>
    </location>
</feature>
<feature type="compositionally biased region" description="Acidic residues" evidence="2">
    <location>
        <begin position="1"/>
        <end position="11"/>
    </location>
</feature>
<feature type="compositionally biased region" description="Low complexity" evidence="2">
    <location>
        <begin position="170"/>
        <end position="182"/>
    </location>
</feature>
<feature type="compositionally biased region" description="Polar residues" evidence="2">
    <location>
        <begin position="197"/>
        <end position="211"/>
    </location>
</feature>
<feature type="compositionally biased region" description="Polar residues" evidence="2">
    <location>
        <begin position="223"/>
        <end position="233"/>
    </location>
</feature>
<feature type="modified residue" description="N-acetylserine" evidence="5">
    <location>
        <position position="2"/>
    </location>
</feature>
<feature type="modified residue" description="Phosphothreonine" evidence="4">
    <location>
        <position position="213"/>
    </location>
</feature>
<feature type="modified residue" description="Phosphoserine" evidence="4">
    <location>
        <position position="217"/>
    </location>
</feature>
<feature type="modified residue" description="Phosphothreonine" evidence="4">
    <location>
        <position position="226"/>
    </location>
</feature>
<feature type="modified residue" description="Phosphoserine" evidence="4">
    <location>
        <position position="235"/>
    </location>
</feature>
<reference key="1">
    <citation type="journal article" date="1998" name="Nature">
        <title>Analysis of 1.9 Mb of contiguous sequence from chromosome 4 of Arabidopsis thaliana.</title>
        <authorList>
            <person name="Bevan M."/>
            <person name="Bancroft I."/>
            <person name="Bent E."/>
            <person name="Love K."/>
            <person name="Goodman H.M."/>
            <person name="Dean C."/>
            <person name="Bergkamp R."/>
            <person name="Dirkse W."/>
            <person name="van Staveren M."/>
            <person name="Stiekema W."/>
            <person name="Drost L."/>
            <person name="Ridley P."/>
            <person name="Hudson S.-A."/>
            <person name="Patel K."/>
            <person name="Murphy G."/>
            <person name="Piffanelli P."/>
            <person name="Wedler H."/>
            <person name="Wedler E."/>
            <person name="Wambutt R."/>
            <person name="Weitzenegger T."/>
            <person name="Pohl T."/>
            <person name="Terryn N."/>
            <person name="Gielen J."/>
            <person name="Villarroel R."/>
            <person name="De Clercq R."/>
            <person name="van Montagu M."/>
            <person name="Lecharny A."/>
            <person name="Aubourg S."/>
            <person name="Gy I."/>
            <person name="Kreis M."/>
            <person name="Lao N."/>
            <person name="Kavanagh T."/>
            <person name="Hempel S."/>
            <person name="Kotter P."/>
            <person name="Entian K.-D."/>
            <person name="Rieger M."/>
            <person name="Schaefer M."/>
            <person name="Funk B."/>
            <person name="Mueller-Auer S."/>
            <person name="Silvey M."/>
            <person name="James R."/>
            <person name="Monfort A."/>
            <person name="Pons A."/>
            <person name="Puigdomenech P."/>
            <person name="Douka A."/>
            <person name="Voukelatou E."/>
            <person name="Milioni D."/>
            <person name="Hatzopoulos P."/>
            <person name="Piravandi E."/>
            <person name="Obermaier B."/>
            <person name="Hilbert H."/>
            <person name="Duesterhoeft A."/>
            <person name="Moores T."/>
            <person name="Jones J.D.G."/>
            <person name="Eneva T."/>
            <person name="Palme K."/>
            <person name="Benes V."/>
            <person name="Rechmann S."/>
            <person name="Ansorge W."/>
            <person name="Cooke R."/>
            <person name="Berger C."/>
            <person name="Delseny M."/>
            <person name="Voet M."/>
            <person name="Volckaert G."/>
            <person name="Mewes H.-W."/>
            <person name="Klosterman S."/>
            <person name="Schueller C."/>
            <person name="Chalwatzis N."/>
        </authorList>
    </citation>
    <scope>NUCLEOTIDE SEQUENCE [LARGE SCALE GENOMIC DNA]</scope>
    <source>
        <strain>cv. Columbia</strain>
    </source>
</reference>
<reference key="2">
    <citation type="journal article" date="1999" name="Nature">
        <title>Sequence and analysis of chromosome 4 of the plant Arabidopsis thaliana.</title>
        <authorList>
            <person name="Mayer K.F.X."/>
            <person name="Schueller C."/>
            <person name="Wambutt R."/>
            <person name="Murphy G."/>
            <person name="Volckaert G."/>
            <person name="Pohl T."/>
            <person name="Duesterhoeft A."/>
            <person name="Stiekema W."/>
            <person name="Entian K.-D."/>
            <person name="Terryn N."/>
            <person name="Harris B."/>
            <person name="Ansorge W."/>
            <person name="Brandt P."/>
            <person name="Grivell L.A."/>
            <person name="Rieger M."/>
            <person name="Weichselgartner M."/>
            <person name="de Simone V."/>
            <person name="Obermaier B."/>
            <person name="Mache R."/>
            <person name="Mueller M."/>
            <person name="Kreis M."/>
            <person name="Delseny M."/>
            <person name="Puigdomenech P."/>
            <person name="Watson M."/>
            <person name="Schmidtheini T."/>
            <person name="Reichert B."/>
            <person name="Portetelle D."/>
            <person name="Perez-Alonso M."/>
            <person name="Boutry M."/>
            <person name="Bancroft I."/>
            <person name="Vos P."/>
            <person name="Hoheisel J."/>
            <person name="Zimmermann W."/>
            <person name="Wedler H."/>
            <person name="Ridley P."/>
            <person name="Langham S.-A."/>
            <person name="McCullagh B."/>
            <person name="Bilham L."/>
            <person name="Robben J."/>
            <person name="van der Schueren J."/>
            <person name="Grymonprez B."/>
            <person name="Chuang Y.-J."/>
            <person name="Vandenbussche F."/>
            <person name="Braeken M."/>
            <person name="Weltjens I."/>
            <person name="Voet M."/>
            <person name="Bastiaens I."/>
            <person name="Aert R."/>
            <person name="Defoor E."/>
            <person name="Weitzenegger T."/>
            <person name="Bothe G."/>
            <person name="Ramsperger U."/>
            <person name="Hilbert H."/>
            <person name="Braun M."/>
            <person name="Holzer E."/>
            <person name="Brandt A."/>
            <person name="Peters S."/>
            <person name="van Staveren M."/>
            <person name="Dirkse W."/>
            <person name="Mooijman P."/>
            <person name="Klein Lankhorst R."/>
            <person name="Rose M."/>
            <person name="Hauf J."/>
            <person name="Koetter P."/>
            <person name="Berneiser S."/>
            <person name="Hempel S."/>
            <person name="Feldpausch M."/>
            <person name="Lamberth S."/>
            <person name="Van den Daele H."/>
            <person name="De Keyser A."/>
            <person name="Buysshaert C."/>
            <person name="Gielen J."/>
            <person name="Villarroel R."/>
            <person name="De Clercq R."/>
            <person name="van Montagu M."/>
            <person name="Rogers J."/>
            <person name="Cronin A."/>
            <person name="Quail M.A."/>
            <person name="Bray-Allen S."/>
            <person name="Clark L."/>
            <person name="Doggett J."/>
            <person name="Hall S."/>
            <person name="Kay M."/>
            <person name="Lennard N."/>
            <person name="McLay K."/>
            <person name="Mayes R."/>
            <person name="Pettett A."/>
            <person name="Rajandream M.A."/>
            <person name="Lyne M."/>
            <person name="Benes V."/>
            <person name="Rechmann S."/>
            <person name="Borkova D."/>
            <person name="Bloecker H."/>
            <person name="Scharfe M."/>
            <person name="Grimm M."/>
            <person name="Loehnert T.-H."/>
            <person name="Dose S."/>
            <person name="de Haan M."/>
            <person name="Maarse A.C."/>
            <person name="Schaefer M."/>
            <person name="Mueller-Auer S."/>
            <person name="Gabel C."/>
            <person name="Fuchs M."/>
            <person name="Fartmann B."/>
            <person name="Granderath K."/>
            <person name="Dauner D."/>
            <person name="Herzl A."/>
            <person name="Neumann S."/>
            <person name="Argiriou A."/>
            <person name="Vitale D."/>
            <person name="Liguori R."/>
            <person name="Piravandi E."/>
            <person name="Massenet O."/>
            <person name="Quigley F."/>
            <person name="Clabauld G."/>
            <person name="Muendlein A."/>
            <person name="Felber R."/>
            <person name="Schnabl S."/>
            <person name="Hiller R."/>
            <person name="Schmidt W."/>
            <person name="Lecharny A."/>
            <person name="Aubourg S."/>
            <person name="Chefdor F."/>
            <person name="Cooke R."/>
            <person name="Berger C."/>
            <person name="Monfort A."/>
            <person name="Casacuberta E."/>
            <person name="Gibbons T."/>
            <person name="Weber N."/>
            <person name="Vandenbol M."/>
            <person name="Bargues M."/>
            <person name="Terol J."/>
            <person name="Torres A."/>
            <person name="Perez-Perez A."/>
            <person name="Purnelle B."/>
            <person name="Bent E."/>
            <person name="Johnson S."/>
            <person name="Tacon D."/>
            <person name="Jesse T."/>
            <person name="Heijnen L."/>
            <person name="Schwarz S."/>
            <person name="Scholler P."/>
            <person name="Heber S."/>
            <person name="Francs P."/>
            <person name="Bielke C."/>
            <person name="Frishman D."/>
            <person name="Haase D."/>
            <person name="Lemcke K."/>
            <person name="Mewes H.-W."/>
            <person name="Stocker S."/>
            <person name="Zaccaria P."/>
            <person name="Bevan M."/>
            <person name="Wilson R.K."/>
            <person name="de la Bastide M."/>
            <person name="Habermann K."/>
            <person name="Parnell L."/>
            <person name="Dedhia N."/>
            <person name="Gnoj L."/>
            <person name="Schutz K."/>
            <person name="Huang E."/>
            <person name="Spiegel L."/>
            <person name="Sekhon M."/>
            <person name="Murray J."/>
            <person name="Sheet P."/>
            <person name="Cordes M."/>
            <person name="Abu-Threideh J."/>
            <person name="Stoneking T."/>
            <person name="Kalicki J."/>
            <person name="Graves T."/>
            <person name="Harmon G."/>
            <person name="Edwards J."/>
            <person name="Latreille P."/>
            <person name="Courtney L."/>
            <person name="Cloud J."/>
            <person name="Abbott A."/>
            <person name="Scott K."/>
            <person name="Johnson D."/>
            <person name="Minx P."/>
            <person name="Bentley D."/>
            <person name="Fulton B."/>
            <person name="Miller N."/>
            <person name="Greco T."/>
            <person name="Kemp K."/>
            <person name="Kramer J."/>
            <person name="Fulton L."/>
            <person name="Mardis E."/>
            <person name="Dante M."/>
            <person name="Pepin K."/>
            <person name="Hillier L.W."/>
            <person name="Nelson J."/>
            <person name="Spieth J."/>
            <person name="Ryan E."/>
            <person name="Andrews S."/>
            <person name="Geisel C."/>
            <person name="Layman D."/>
            <person name="Du H."/>
            <person name="Ali J."/>
            <person name="Berghoff A."/>
            <person name="Jones K."/>
            <person name="Drone K."/>
            <person name="Cotton M."/>
            <person name="Joshu C."/>
            <person name="Antonoiu B."/>
            <person name="Zidanic M."/>
            <person name="Strong C."/>
            <person name="Sun H."/>
            <person name="Lamar B."/>
            <person name="Yordan C."/>
            <person name="Ma P."/>
            <person name="Zhong J."/>
            <person name="Preston R."/>
            <person name="Vil D."/>
            <person name="Shekher M."/>
            <person name="Matero A."/>
            <person name="Shah R."/>
            <person name="Swaby I.K."/>
            <person name="O'Shaughnessy A."/>
            <person name="Rodriguez M."/>
            <person name="Hoffman J."/>
            <person name="Till S."/>
            <person name="Granat S."/>
            <person name="Shohdy N."/>
            <person name="Hasegawa A."/>
            <person name="Hameed A."/>
            <person name="Lodhi M."/>
            <person name="Johnson A."/>
            <person name="Chen E."/>
            <person name="Marra M.A."/>
            <person name="Martienssen R."/>
            <person name="McCombie W.R."/>
        </authorList>
    </citation>
    <scope>NUCLEOTIDE SEQUENCE [LARGE SCALE GENOMIC DNA]</scope>
    <source>
        <strain>cv. Columbia</strain>
    </source>
</reference>
<reference key="3">
    <citation type="journal article" date="2017" name="Plant J.">
        <title>Araport11: a complete reannotation of the Arabidopsis thaliana reference genome.</title>
        <authorList>
            <person name="Cheng C.Y."/>
            <person name="Krishnakumar V."/>
            <person name="Chan A.P."/>
            <person name="Thibaud-Nissen F."/>
            <person name="Schobel S."/>
            <person name="Town C.D."/>
        </authorList>
    </citation>
    <scope>GENOME REANNOTATION</scope>
    <source>
        <strain>cv. Columbia</strain>
    </source>
</reference>
<reference key="4">
    <citation type="journal article" date="2003" name="Science">
        <title>Empirical analysis of transcriptional activity in the Arabidopsis genome.</title>
        <authorList>
            <person name="Yamada K."/>
            <person name="Lim J."/>
            <person name="Dale J.M."/>
            <person name="Chen H."/>
            <person name="Shinn P."/>
            <person name="Palm C.J."/>
            <person name="Southwick A.M."/>
            <person name="Wu H.C."/>
            <person name="Kim C.J."/>
            <person name="Nguyen M."/>
            <person name="Pham P.K."/>
            <person name="Cheuk R.F."/>
            <person name="Karlin-Newmann G."/>
            <person name="Liu S.X."/>
            <person name="Lam B."/>
            <person name="Sakano H."/>
            <person name="Wu T."/>
            <person name="Yu G."/>
            <person name="Miranda M."/>
            <person name="Quach H.L."/>
            <person name="Tripp M."/>
            <person name="Chang C.H."/>
            <person name="Lee J.M."/>
            <person name="Toriumi M.J."/>
            <person name="Chan M.M."/>
            <person name="Tang C.C."/>
            <person name="Onodera C.S."/>
            <person name="Deng J.M."/>
            <person name="Akiyama K."/>
            <person name="Ansari Y."/>
            <person name="Arakawa T."/>
            <person name="Banh J."/>
            <person name="Banno F."/>
            <person name="Bowser L."/>
            <person name="Brooks S.Y."/>
            <person name="Carninci P."/>
            <person name="Chao Q."/>
            <person name="Choy N."/>
            <person name="Enju A."/>
            <person name="Goldsmith A.D."/>
            <person name="Gurjal M."/>
            <person name="Hansen N.F."/>
            <person name="Hayashizaki Y."/>
            <person name="Johnson-Hopson C."/>
            <person name="Hsuan V.W."/>
            <person name="Iida K."/>
            <person name="Karnes M."/>
            <person name="Khan S."/>
            <person name="Koesema E."/>
            <person name="Ishida J."/>
            <person name="Jiang P.X."/>
            <person name="Jones T."/>
            <person name="Kawai J."/>
            <person name="Kamiya A."/>
            <person name="Meyers C."/>
            <person name="Nakajima M."/>
            <person name="Narusaka M."/>
            <person name="Seki M."/>
            <person name="Sakurai T."/>
            <person name="Satou M."/>
            <person name="Tamse R."/>
            <person name="Vaysberg M."/>
            <person name="Wallender E.K."/>
            <person name="Wong C."/>
            <person name="Yamamura Y."/>
            <person name="Yuan S."/>
            <person name="Shinozaki K."/>
            <person name="Davis R.W."/>
            <person name="Theologis A."/>
            <person name="Ecker J.R."/>
        </authorList>
    </citation>
    <scope>NUCLEOTIDE SEQUENCE [LARGE SCALE MRNA]</scope>
    <source>
        <strain>cv. Columbia</strain>
    </source>
</reference>
<reference key="5">
    <citation type="submission" date="2002-03" db="EMBL/GenBank/DDBJ databases">
        <title>Full-length cDNA from Arabidopsis thaliana.</title>
        <authorList>
            <person name="Brover V.V."/>
            <person name="Troukhan M.E."/>
            <person name="Alexandrov N.A."/>
            <person name="Lu Y.-P."/>
            <person name="Flavell R.B."/>
            <person name="Feldmann K.A."/>
        </authorList>
    </citation>
    <scope>NUCLEOTIDE SEQUENCE [LARGE SCALE MRNA]</scope>
</reference>
<reference key="6">
    <citation type="journal article" date="2009" name="Plant Physiol.">
        <title>Large-scale Arabidopsis phosphoproteome profiling reveals novel chloroplast kinase substrates and phosphorylation networks.</title>
        <authorList>
            <person name="Reiland S."/>
            <person name="Messerli G."/>
            <person name="Baerenfaller K."/>
            <person name="Gerrits B."/>
            <person name="Endler A."/>
            <person name="Grossmann J."/>
            <person name="Gruissem W."/>
            <person name="Baginsky S."/>
        </authorList>
    </citation>
    <scope>PHOSPHORYLATION [LARGE SCALE ANALYSIS] AT THR-213; SER-217; THR-226 AND SER-235</scope>
    <scope>IDENTIFICATION BY MASS SPECTROMETRY [LARGE SCALE ANALYSIS]</scope>
</reference>
<reference key="7">
    <citation type="journal article" date="2012" name="Mol. Cell. Proteomics">
        <title>Comparative large-scale characterisation of plant vs. mammal proteins reveals similar and idiosyncratic N-alpha acetylation features.</title>
        <authorList>
            <person name="Bienvenut W.V."/>
            <person name="Sumpton D."/>
            <person name="Martinez A."/>
            <person name="Lilla S."/>
            <person name="Espagne C."/>
            <person name="Meinnel T."/>
            <person name="Giglione C."/>
        </authorList>
    </citation>
    <scope>ACETYLATION [LARGE SCALE ANALYSIS] AT SER-2</scope>
    <scope>CLEAVAGE OF INITIATOR METHIONINE [LARGE SCALE ANALYSIS]</scope>
    <scope>IDENTIFICATION BY MASS SPECTROMETRY [LARGE SCALE ANALYSIS]</scope>
</reference>
<name>Y4554_ARATH</name>
<protein>
    <recommendedName>
        <fullName>Uncharacterized protein At4g15545</fullName>
    </recommendedName>
</protein>